<name>FLUC2_BRUME</name>
<protein>
    <recommendedName>
        <fullName evidence="1">Fluoride-specific ion channel FluC 2</fullName>
    </recommendedName>
</protein>
<accession>Q8YI11</accession>
<reference key="1">
    <citation type="journal article" date="2002" name="Proc. Natl. Acad. Sci. U.S.A.">
        <title>The genome sequence of the facultative intracellular pathogen Brucella melitensis.</title>
        <authorList>
            <person name="DelVecchio V.G."/>
            <person name="Kapatral V."/>
            <person name="Redkar R.J."/>
            <person name="Patra G."/>
            <person name="Mujer C."/>
            <person name="Los T."/>
            <person name="Ivanova N."/>
            <person name="Anderson I."/>
            <person name="Bhattacharyya A."/>
            <person name="Lykidis A."/>
            <person name="Reznik G."/>
            <person name="Jablonski L."/>
            <person name="Larsen N."/>
            <person name="D'Souza M."/>
            <person name="Bernal A."/>
            <person name="Mazur M."/>
            <person name="Goltsman E."/>
            <person name="Selkov E."/>
            <person name="Elzer P.H."/>
            <person name="Hagius S."/>
            <person name="O'Callaghan D."/>
            <person name="Letesson J.-J."/>
            <person name="Haselkorn R."/>
            <person name="Kyrpides N.C."/>
            <person name="Overbeek R."/>
        </authorList>
    </citation>
    <scope>NUCLEOTIDE SEQUENCE [LARGE SCALE GENOMIC DNA]</scope>
    <source>
        <strain>ATCC 23456 / CCUG 17765 / NCTC 10094 / 16M</strain>
    </source>
</reference>
<comment type="function">
    <text evidence="1">Fluoride-specific ion channel. Important for reducing fluoride concentration in the cell, thus reducing its toxicity.</text>
</comment>
<comment type="catalytic activity">
    <reaction evidence="1">
        <text>fluoride(in) = fluoride(out)</text>
        <dbReference type="Rhea" id="RHEA:76159"/>
        <dbReference type="ChEBI" id="CHEBI:17051"/>
    </reaction>
    <physiologicalReaction direction="left-to-right" evidence="1">
        <dbReference type="Rhea" id="RHEA:76160"/>
    </physiologicalReaction>
</comment>
<comment type="activity regulation">
    <text evidence="1">Na(+) is not transported, but it plays an essential structural role and its presence is essential for fluoride channel function.</text>
</comment>
<comment type="subcellular location">
    <subcellularLocation>
        <location evidence="1">Cell inner membrane</location>
        <topology evidence="1">Multi-pass membrane protein</topology>
    </subcellularLocation>
</comment>
<comment type="similarity">
    <text evidence="1">Belongs to the fluoride channel Fluc/FEX (TC 1.A.43) family.</text>
</comment>
<gene>
    <name evidence="1" type="primary">fluC2</name>
    <name evidence="1" type="synonym">crcB2</name>
    <name type="ordered locus">BMEI0634</name>
</gene>
<sequence length="270" mass="28298">MLDIIILVVIGGAFGAMTREFIMLMVPPLTDGFPLDILVANVVACFLLGTVTALYARKIHSRDVHTIIGTGMMGGVSTFSSFAYGSVVLASASVSAFLIAAAYVTVSVVAGYVAVLAGMKFGEKSADILHRYPPMASIIDSGLVTVESRHSVAETIERVAAKAKSMGMNVFTRVDHGAGAKEAGLGLPPTELIIFGNPQNGTVLMQDKRTIGLDLPIRALAWEDGSGKVWLTVNDPAWLAQRHSLGLSSDVAIKAMVTGTGTVTKYAAGD</sequence>
<organism>
    <name type="scientific">Brucella melitensis biotype 1 (strain ATCC 23456 / CCUG 17765 / NCTC 10094 / 16M)</name>
    <dbReference type="NCBI Taxonomy" id="224914"/>
    <lineage>
        <taxon>Bacteria</taxon>
        <taxon>Pseudomonadati</taxon>
        <taxon>Pseudomonadota</taxon>
        <taxon>Alphaproteobacteria</taxon>
        <taxon>Hyphomicrobiales</taxon>
        <taxon>Brucellaceae</taxon>
        <taxon>Brucella/Ochrobactrum group</taxon>
        <taxon>Brucella</taxon>
    </lineage>
</organism>
<evidence type="ECO:0000255" key="1">
    <source>
        <dbReference type="HAMAP-Rule" id="MF_00454"/>
    </source>
</evidence>
<feature type="chain" id="PRO_0000110072" description="Fluoride-specific ion channel FluC 2">
    <location>
        <begin position="1"/>
        <end position="270"/>
    </location>
</feature>
<feature type="transmembrane region" description="Helical" evidence="1">
    <location>
        <begin position="4"/>
        <end position="24"/>
    </location>
</feature>
<feature type="transmembrane region" description="Helical" evidence="1">
    <location>
        <begin position="35"/>
        <end position="55"/>
    </location>
</feature>
<feature type="transmembrane region" description="Helical" evidence="1">
    <location>
        <begin position="67"/>
        <end position="87"/>
    </location>
</feature>
<feature type="transmembrane region" description="Helical" evidence="1">
    <location>
        <begin position="96"/>
        <end position="116"/>
    </location>
</feature>
<feature type="binding site" evidence="1">
    <location>
        <position position="74"/>
    </location>
    <ligand>
        <name>Na(+)</name>
        <dbReference type="ChEBI" id="CHEBI:29101"/>
        <note>structural</note>
    </ligand>
</feature>
<feature type="binding site" evidence="1">
    <location>
        <position position="77"/>
    </location>
    <ligand>
        <name>Na(+)</name>
        <dbReference type="ChEBI" id="CHEBI:29101"/>
        <note>structural</note>
    </ligand>
</feature>
<keyword id="KW-0997">Cell inner membrane</keyword>
<keyword id="KW-1003">Cell membrane</keyword>
<keyword id="KW-0407">Ion channel</keyword>
<keyword id="KW-0406">Ion transport</keyword>
<keyword id="KW-0472">Membrane</keyword>
<keyword id="KW-0479">Metal-binding</keyword>
<keyword id="KW-0915">Sodium</keyword>
<keyword id="KW-0812">Transmembrane</keyword>
<keyword id="KW-1133">Transmembrane helix</keyword>
<keyword id="KW-0813">Transport</keyword>
<proteinExistence type="inferred from homology"/>
<dbReference type="EMBL" id="AE008917">
    <property type="protein sequence ID" value="AAL51815.1"/>
    <property type="molecule type" value="Genomic_DNA"/>
</dbReference>
<dbReference type="PIR" id="AD3331">
    <property type="entry name" value="AD3331"/>
</dbReference>
<dbReference type="SMR" id="Q8YI11"/>
<dbReference type="GeneID" id="29593419"/>
<dbReference type="KEGG" id="bme:BMEI0634"/>
<dbReference type="KEGG" id="bmel:DK63_792"/>
<dbReference type="PATRIC" id="fig|224914.52.peg.829"/>
<dbReference type="eggNOG" id="COG0239">
    <property type="taxonomic scope" value="Bacteria"/>
</dbReference>
<dbReference type="eggNOG" id="COG3439">
    <property type="taxonomic scope" value="Bacteria"/>
</dbReference>
<dbReference type="PhylomeDB" id="Q8YI11"/>
<dbReference type="Proteomes" id="UP000000419">
    <property type="component" value="Chromosome I"/>
</dbReference>
<dbReference type="GO" id="GO:0005886">
    <property type="term" value="C:plasma membrane"/>
    <property type="evidence" value="ECO:0007669"/>
    <property type="project" value="UniProtKB-SubCell"/>
</dbReference>
<dbReference type="GO" id="GO:0062054">
    <property type="term" value="F:fluoride channel activity"/>
    <property type="evidence" value="ECO:0007669"/>
    <property type="project" value="UniProtKB-UniRule"/>
</dbReference>
<dbReference type="GO" id="GO:0046872">
    <property type="term" value="F:metal ion binding"/>
    <property type="evidence" value="ECO:0007669"/>
    <property type="project" value="UniProtKB-KW"/>
</dbReference>
<dbReference type="GO" id="GO:0140114">
    <property type="term" value="P:cellular detoxification of fluoride"/>
    <property type="evidence" value="ECO:0007669"/>
    <property type="project" value="UniProtKB-UniRule"/>
</dbReference>
<dbReference type="CDD" id="cd14797">
    <property type="entry name" value="DUF302"/>
    <property type="match status" value="1"/>
</dbReference>
<dbReference type="Gene3D" id="3.30.310.70">
    <property type="entry name" value="TT1751-like domain"/>
    <property type="match status" value="1"/>
</dbReference>
<dbReference type="HAMAP" id="MF_00454">
    <property type="entry name" value="FluC"/>
    <property type="match status" value="1"/>
</dbReference>
<dbReference type="InterPro" id="IPR005180">
    <property type="entry name" value="DUF302"/>
</dbReference>
<dbReference type="InterPro" id="IPR003691">
    <property type="entry name" value="FluC"/>
</dbReference>
<dbReference type="InterPro" id="IPR035923">
    <property type="entry name" value="TT1751-like_sf"/>
</dbReference>
<dbReference type="NCBIfam" id="NF002454">
    <property type="entry name" value="PRK01636.1-2"/>
    <property type="match status" value="1"/>
</dbReference>
<dbReference type="PANTHER" id="PTHR38342:SF2">
    <property type="entry name" value="INNER MEMBRANE OR EXPORTED"/>
    <property type="match status" value="1"/>
</dbReference>
<dbReference type="PANTHER" id="PTHR38342">
    <property type="entry name" value="SLR5037 PROTEIN"/>
    <property type="match status" value="1"/>
</dbReference>
<dbReference type="Pfam" id="PF02537">
    <property type="entry name" value="CRCB"/>
    <property type="match status" value="1"/>
</dbReference>
<dbReference type="Pfam" id="PF03625">
    <property type="entry name" value="DUF302"/>
    <property type="match status" value="1"/>
</dbReference>
<dbReference type="SUPFAM" id="SSF103247">
    <property type="entry name" value="TT1751-like"/>
    <property type="match status" value="1"/>
</dbReference>